<protein>
    <recommendedName>
        <fullName>SWR1 complex subunit vps71</fullName>
    </recommendedName>
</protein>
<reference key="1">
    <citation type="journal article" date="2002" name="Nature">
        <title>The genome sequence of Schizosaccharomyces pombe.</title>
        <authorList>
            <person name="Wood V."/>
            <person name="Gwilliam R."/>
            <person name="Rajandream M.A."/>
            <person name="Lyne M.H."/>
            <person name="Lyne R."/>
            <person name="Stewart A."/>
            <person name="Sgouros J.G."/>
            <person name="Peat N."/>
            <person name="Hayles J."/>
            <person name="Baker S.G."/>
            <person name="Basham D."/>
            <person name="Bowman S."/>
            <person name="Brooks K."/>
            <person name="Brown D."/>
            <person name="Brown S."/>
            <person name="Chillingworth T."/>
            <person name="Churcher C.M."/>
            <person name="Collins M."/>
            <person name="Connor R."/>
            <person name="Cronin A."/>
            <person name="Davis P."/>
            <person name="Feltwell T."/>
            <person name="Fraser A."/>
            <person name="Gentles S."/>
            <person name="Goble A."/>
            <person name="Hamlin N."/>
            <person name="Harris D.E."/>
            <person name="Hidalgo J."/>
            <person name="Hodgson G."/>
            <person name="Holroyd S."/>
            <person name="Hornsby T."/>
            <person name="Howarth S."/>
            <person name="Huckle E.J."/>
            <person name="Hunt S."/>
            <person name="Jagels K."/>
            <person name="James K.D."/>
            <person name="Jones L."/>
            <person name="Jones M."/>
            <person name="Leather S."/>
            <person name="McDonald S."/>
            <person name="McLean J."/>
            <person name="Mooney P."/>
            <person name="Moule S."/>
            <person name="Mungall K.L."/>
            <person name="Murphy L.D."/>
            <person name="Niblett D."/>
            <person name="Odell C."/>
            <person name="Oliver K."/>
            <person name="O'Neil S."/>
            <person name="Pearson D."/>
            <person name="Quail M.A."/>
            <person name="Rabbinowitsch E."/>
            <person name="Rutherford K.M."/>
            <person name="Rutter S."/>
            <person name="Saunders D."/>
            <person name="Seeger K."/>
            <person name="Sharp S."/>
            <person name="Skelton J."/>
            <person name="Simmonds M.N."/>
            <person name="Squares R."/>
            <person name="Squares S."/>
            <person name="Stevens K."/>
            <person name="Taylor K."/>
            <person name="Taylor R.G."/>
            <person name="Tivey A."/>
            <person name="Walsh S.V."/>
            <person name="Warren T."/>
            <person name="Whitehead S."/>
            <person name="Woodward J.R."/>
            <person name="Volckaert G."/>
            <person name="Aert R."/>
            <person name="Robben J."/>
            <person name="Grymonprez B."/>
            <person name="Weltjens I."/>
            <person name="Vanstreels E."/>
            <person name="Rieger M."/>
            <person name="Schaefer M."/>
            <person name="Mueller-Auer S."/>
            <person name="Gabel C."/>
            <person name="Fuchs M."/>
            <person name="Duesterhoeft A."/>
            <person name="Fritzc C."/>
            <person name="Holzer E."/>
            <person name="Moestl D."/>
            <person name="Hilbert H."/>
            <person name="Borzym K."/>
            <person name="Langer I."/>
            <person name="Beck A."/>
            <person name="Lehrach H."/>
            <person name="Reinhardt R."/>
            <person name="Pohl T.M."/>
            <person name="Eger P."/>
            <person name="Zimmermann W."/>
            <person name="Wedler H."/>
            <person name="Wambutt R."/>
            <person name="Purnelle B."/>
            <person name="Goffeau A."/>
            <person name="Cadieu E."/>
            <person name="Dreano S."/>
            <person name="Gloux S."/>
            <person name="Lelaure V."/>
            <person name="Mottier S."/>
            <person name="Galibert F."/>
            <person name="Aves S.J."/>
            <person name="Xiang Z."/>
            <person name="Hunt C."/>
            <person name="Moore K."/>
            <person name="Hurst S.M."/>
            <person name="Lucas M."/>
            <person name="Rochet M."/>
            <person name="Gaillardin C."/>
            <person name="Tallada V.A."/>
            <person name="Garzon A."/>
            <person name="Thode G."/>
            <person name="Daga R.R."/>
            <person name="Cruzado L."/>
            <person name="Jimenez J."/>
            <person name="Sanchez M."/>
            <person name="del Rey F."/>
            <person name="Benito J."/>
            <person name="Dominguez A."/>
            <person name="Revuelta J.L."/>
            <person name="Moreno S."/>
            <person name="Armstrong J."/>
            <person name="Forsburg S.L."/>
            <person name="Cerutti L."/>
            <person name="Lowe T."/>
            <person name="McCombie W.R."/>
            <person name="Paulsen I."/>
            <person name="Potashkin J."/>
            <person name="Shpakovski G.V."/>
            <person name="Ussery D."/>
            <person name="Barrell B.G."/>
            <person name="Nurse P."/>
        </authorList>
    </citation>
    <scope>NUCLEOTIDE SEQUENCE [LARGE SCALE GENOMIC DNA]</scope>
    <source>
        <strain>972 / ATCC 24843</strain>
    </source>
</reference>
<reference key="2">
    <citation type="journal article" date="2006" name="Nat. Biotechnol.">
        <title>ORFeome cloning and global analysis of protein localization in the fission yeast Schizosaccharomyces pombe.</title>
        <authorList>
            <person name="Matsuyama A."/>
            <person name="Arai R."/>
            <person name="Yashiroda Y."/>
            <person name="Shirai A."/>
            <person name="Kamata A."/>
            <person name="Sekido S."/>
            <person name="Kobayashi Y."/>
            <person name="Hashimoto A."/>
            <person name="Hamamoto M."/>
            <person name="Hiraoka Y."/>
            <person name="Horinouchi S."/>
            <person name="Yoshida M."/>
        </authorList>
    </citation>
    <scope>SUBCELLULAR LOCATION [LARGE SCALE ANALYSIS]</scope>
</reference>
<reference key="3">
    <citation type="journal article" date="2008" name="Genome Biol.">
        <title>Chromatin Central: towards the comparative proteome by accurate mapping of the yeast proteomic environment.</title>
        <authorList>
            <person name="Shevchenko A."/>
            <person name="Roguev A."/>
            <person name="Schaft D."/>
            <person name="Buchanan L."/>
            <person name="Habermann B."/>
            <person name="Sakalar C."/>
            <person name="Thomas H."/>
            <person name="Krogan N.J."/>
            <person name="Shevchenko A."/>
            <person name="Stewart A.F."/>
        </authorList>
    </citation>
    <scope>IDENTIFICATION IN THE SWR1 COMPLEX</scope>
    <scope>IDENTIFICATION BY MASS SPECTROMETRY</scope>
</reference>
<organism>
    <name type="scientific">Schizosaccharomyces pombe (strain 972 / ATCC 24843)</name>
    <name type="common">Fission yeast</name>
    <dbReference type="NCBI Taxonomy" id="284812"/>
    <lineage>
        <taxon>Eukaryota</taxon>
        <taxon>Fungi</taxon>
        <taxon>Dikarya</taxon>
        <taxon>Ascomycota</taxon>
        <taxon>Taphrinomycotina</taxon>
        <taxon>Schizosaccharomycetes</taxon>
        <taxon>Schizosaccharomycetales</taxon>
        <taxon>Schizosaccharomycetaceae</taxon>
        <taxon>Schizosaccharomyces</taxon>
    </lineage>
</organism>
<gene>
    <name type="primary">vps71</name>
    <name type="ORF">SPBC29A3.05</name>
</gene>
<accession>O59669</accession>
<feature type="chain" id="PRO_0000173559" description="SWR1 complex subunit vps71">
    <location>
        <begin position="1"/>
        <end position="139"/>
    </location>
</feature>
<feature type="zinc finger region" description="HIT-type" evidence="1">
    <location>
        <begin position="102"/>
        <end position="134"/>
    </location>
</feature>
<feature type="binding site" evidence="1">
    <location>
        <position position="102"/>
    </location>
    <ligand>
        <name>Zn(2+)</name>
        <dbReference type="ChEBI" id="CHEBI:29105"/>
        <label>1</label>
    </ligand>
</feature>
<feature type="binding site" evidence="1">
    <location>
        <position position="105"/>
    </location>
    <ligand>
        <name>Zn(2+)</name>
        <dbReference type="ChEBI" id="CHEBI:29105"/>
        <label>1</label>
    </ligand>
</feature>
<feature type="binding site" evidence="1">
    <location>
        <position position="113"/>
    </location>
    <ligand>
        <name>Zn(2+)</name>
        <dbReference type="ChEBI" id="CHEBI:29105"/>
        <label>2</label>
    </ligand>
</feature>
<feature type="binding site" evidence="1">
    <location>
        <position position="116"/>
    </location>
    <ligand>
        <name>Zn(2+)</name>
        <dbReference type="ChEBI" id="CHEBI:29105"/>
        <label>2</label>
    </ligand>
</feature>
<feature type="binding site" evidence="1">
    <location>
        <position position="121"/>
    </location>
    <ligand>
        <name>Zn(2+)</name>
        <dbReference type="ChEBI" id="CHEBI:29105"/>
        <label>1</label>
    </ligand>
</feature>
<feature type="binding site" evidence="1">
    <location>
        <position position="125"/>
    </location>
    <ligand>
        <name>Zn(2+)</name>
        <dbReference type="ChEBI" id="CHEBI:29105"/>
        <label>1</label>
    </ligand>
</feature>
<feature type="binding site" evidence="1">
    <location>
        <position position="129"/>
    </location>
    <ligand>
        <name>Zn(2+)</name>
        <dbReference type="ChEBI" id="CHEBI:29105"/>
        <label>2</label>
    </ligand>
</feature>
<feature type="binding site" evidence="1">
    <location>
        <position position="134"/>
    </location>
    <ligand>
        <name>Zn(2+)</name>
        <dbReference type="ChEBI" id="CHEBI:29105"/>
        <label>2</label>
    </ligand>
</feature>
<comment type="function">
    <text>Component of the SWR1 complex which mediates the ATP-dependent exchange of histone H2A for the H2A variant H2A.Z leading to transcriptional regulation of selected genes by chromatin remodeling.</text>
</comment>
<comment type="subunit">
    <text evidence="3">Component of the SWR1 chromatin-remodeling complex.</text>
</comment>
<comment type="subcellular location">
    <subcellularLocation>
        <location evidence="2">Nucleus</location>
    </subcellularLocation>
    <subcellularLocation>
        <location evidence="2">Cytoplasm</location>
    </subcellularLocation>
</comment>
<sequence>MFVTPIEHAVQKRKKQKQRSVVDPVTRERQLKRNLADLEKDNFSDIRFEIPKDLLQRRVLPISVRRILSSRKTFVNYLDETPNSRYNTCVAKPSYKPPRKFCNVCGYWGKYACQNCGTSYCSKGCEVIHSETRCMKVYA</sequence>
<proteinExistence type="evidence at protein level"/>
<keyword id="KW-0156">Chromatin regulator</keyword>
<keyword id="KW-0963">Cytoplasm</keyword>
<keyword id="KW-0479">Metal-binding</keyword>
<keyword id="KW-0539">Nucleus</keyword>
<keyword id="KW-1185">Reference proteome</keyword>
<keyword id="KW-0862">Zinc</keyword>
<keyword id="KW-0863">Zinc-finger</keyword>
<dbReference type="EMBL" id="CU329671">
    <property type="protein sequence ID" value="CAB60106.1"/>
    <property type="molecule type" value="Genomic_DNA"/>
</dbReference>
<dbReference type="PIR" id="T40076">
    <property type="entry name" value="T40076"/>
</dbReference>
<dbReference type="RefSeq" id="NP_595833.1">
    <property type="nucleotide sequence ID" value="NM_001021737.2"/>
</dbReference>
<dbReference type="SMR" id="O59669"/>
<dbReference type="BioGRID" id="277040">
    <property type="interactions" value="84"/>
</dbReference>
<dbReference type="FunCoup" id="O59669">
    <property type="interactions" value="36"/>
</dbReference>
<dbReference type="STRING" id="284812.O59669"/>
<dbReference type="PaxDb" id="4896-SPBC29A3.05.1"/>
<dbReference type="EnsemblFungi" id="SPBC29A3.05.1">
    <property type="protein sequence ID" value="SPBC29A3.05.1:pep"/>
    <property type="gene ID" value="SPBC29A3.05"/>
</dbReference>
<dbReference type="GeneID" id="2540512"/>
<dbReference type="KEGG" id="spo:2540512"/>
<dbReference type="PomBase" id="SPBC29A3.05">
    <property type="gene designation" value="vps71"/>
</dbReference>
<dbReference type="VEuPathDB" id="FungiDB:SPBC29A3.05"/>
<dbReference type="eggNOG" id="KOG3362">
    <property type="taxonomic scope" value="Eukaryota"/>
</dbReference>
<dbReference type="HOGENOM" id="CLU_106918_2_0_1"/>
<dbReference type="InParanoid" id="O59669"/>
<dbReference type="OMA" id="CGMKYCS"/>
<dbReference type="PhylomeDB" id="O59669"/>
<dbReference type="PRO" id="PR:O59669"/>
<dbReference type="Proteomes" id="UP000002485">
    <property type="component" value="Chromosome II"/>
</dbReference>
<dbReference type="GO" id="GO:0005829">
    <property type="term" value="C:cytosol"/>
    <property type="evidence" value="ECO:0007005"/>
    <property type="project" value="PomBase"/>
</dbReference>
<dbReference type="GO" id="GO:0005634">
    <property type="term" value="C:nucleus"/>
    <property type="evidence" value="ECO:0007005"/>
    <property type="project" value="PomBase"/>
</dbReference>
<dbReference type="GO" id="GO:0000812">
    <property type="term" value="C:Swr1 complex"/>
    <property type="evidence" value="ECO:0000314"/>
    <property type="project" value="PomBase"/>
</dbReference>
<dbReference type="GO" id="GO:0031491">
    <property type="term" value="F:nucleosome binding"/>
    <property type="evidence" value="ECO:0000318"/>
    <property type="project" value="GO_Central"/>
</dbReference>
<dbReference type="GO" id="GO:0008270">
    <property type="term" value="F:zinc ion binding"/>
    <property type="evidence" value="ECO:0007669"/>
    <property type="project" value="UniProtKB-KW"/>
</dbReference>
<dbReference type="GO" id="GO:0006338">
    <property type="term" value="P:chromatin remodeling"/>
    <property type="evidence" value="ECO:0000353"/>
    <property type="project" value="PomBase"/>
</dbReference>
<dbReference type="GO" id="GO:0045815">
    <property type="term" value="P:transcription initiation-coupled chromatin remodeling"/>
    <property type="evidence" value="ECO:0000305"/>
    <property type="project" value="PomBase"/>
</dbReference>
<dbReference type="CDD" id="cd21437">
    <property type="entry name" value="zf-HIT_ZNHIT1_like"/>
    <property type="match status" value="1"/>
</dbReference>
<dbReference type="InterPro" id="IPR039723">
    <property type="entry name" value="Vps71/ZNHIT1"/>
</dbReference>
<dbReference type="InterPro" id="IPR007529">
    <property type="entry name" value="Znf_HIT"/>
</dbReference>
<dbReference type="PANTHER" id="PTHR13093">
    <property type="entry name" value="ZINC FINGER HIT DOMAIN CONTAINING PROTEIN 1"/>
    <property type="match status" value="1"/>
</dbReference>
<dbReference type="Pfam" id="PF04438">
    <property type="entry name" value="zf-HIT"/>
    <property type="match status" value="1"/>
</dbReference>
<dbReference type="PROSITE" id="PS51083">
    <property type="entry name" value="ZF_HIT"/>
    <property type="match status" value="1"/>
</dbReference>
<name>VPS71_SCHPO</name>
<evidence type="ECO:0000255" key="1">
    <source>
        <dbReference type="PROSITE-ProRule" id="PRU00453"/>
    </source>
</evidence>
<evidence type="ECO:0000269" key="2">
    <source>
    </source>
</evidence>
<evidence type="ECO:0000269" key="3">
    <source>
    </source>
</evidence>